<comment type="function">
    <text evidence="8 9 10 11 12 13">Guanylate cyclase involved in the production of the second messenger cGMP (PubMed:24284209). Acts as a receptor for the NPLP1-4 peptide and modulates the innate immune IMD pathway in response to salt stress by inducing nuclear translocation of NF-kappa-B protein Rel which leads to increased expression of the antimicrobial peptide diptericin (PubMed:21893139). Plays a role in Sema-1a-mediated axon repulsion which is required for the correct establishment of neuromuscular connectivity (PubMed:15282266, PubMed:24284209). Required in developing embryonic somatic muscle for correct patterning of ventral and lateral muscles and for localization of integrin beta-ps at developing dorsal muscle myotendinous junctions (PubMed:23213443). Required for invagination, migration and lumen shape of the embryonic salivary gland by regulating the localization of the integrin-binding protein rhea/Talin to the visceral mesoderm surrounding the gland and maintaining the laminin matrix (PubMed:23862019). Required in the developing wing to regulate extracellular matrix (ECM) organization by activating the cGMP-dependent protein kinase For which represses the activity of matrix metalloproteases such as Mmp2 and decreases ECM matrix reorganization (PubMed:26440503).</text>
</comment>
<comment type="catalytic activity">
    <reaction evidence="1 6 12">
        <text>GTP = 3',5'-cyclic GMP + diphosphate</text>
        <dbReference type="Rhea" id="RHEA:13665"/>
        <dbReference type="ChEBI" id="CHEBI:33019"/>
        <dbReference type="ChEBI" id="CHEBI:37565"/>
        <dbReference type="ChEBI" id="CHEBI:57746"/>
        <dbReference type="EC" id="4.6.1.2"/>
    </reaction>
</comment>
<comment type="subunit">
    <text evidence="12">Interacts with the semaphorin 1A receptor PlexA; PlexA enhances Gyc76C catalytic activity. Interacts with the PDZ domain-containing protein kermit; kermit increases cell surface expression of Gyc76C.</text>
</comment>
<comment type="subcellular location">
    <subcellularLocation>
        <location evidence="12">Cell membrane</location>
        <topology evidence="17">Single-pass type I membrane protein</topology>
    </subcellularLocation>
</comment>
<comment type="tissue specificity">
    <text evidence="10 15">In the adult, widely distributed in the head and thorax with highest levels in the optic lobe and central brain and expression also detected in the retina (PubMed:7759483). Expressed at similar levels in adult head and body (PubMed:7759483). In females, highly expressed in oocytes with lower levels in the digestive tract (PubMed:7759483). In mid-embryogenesis, enriched in the circular visceral mesoderm that overlies the migrating salivary gland and in the fat body that underlies the gland but at background levels in the gland itself (PubMed:23213443). In late embryogenesis, detected in the mature salivary gland, in the somatic body wall muscles and the tendon cells to which the muscles attach, and in the constricting midgut (PubMed:23213443). Also expressed in migrating tracheal cells at mid-embryogenesis and in the developed trachea at the end of embryogenesis with enrichment in the apical domains (PubMed:23213443).</text>
</comment>
<comment type="developmental stage">
    <text evidence="14 15">Expressed in embryo, larva, pupa and adult (PubMed:7706258, PubMed:7759483). Expressed at very high levels in early cleavage stage embryos at 0-2 hours followed by lower expression at 2-6 and 6-10 hours of embryogenesis (PubMed:7706258). During later stages of embryogenesis at 10-14 and 14-18 hours, expressed again at high levels, particularly in muscle fibers (PubMed:7706258). Very low levels in larval and pupal stages (PubMed:7706258).</text>
</comment>
<comment type="domain">
    <text evidence="8">The guanylate cyclase domain is required for Sema-1a-mediated axon repulsion.</text>
</comment>
<comment type="domain">
    <text evidence="3">The protein kinase domain is predicted to be catalytically inactive.</text>
</comment>
<comment type="disruption phenotype">
    <text evidence="8 9 10 11 13">Abnormal patterning of the somatic body wall muscles with numerous ventral and lateral muscles that fail to extend or are missing and reduced levels of integrin beta-ps at dorsal muscle myotendinous junctions (PubMed:23213443). Defects in salivary gland invagination, migration and lumen shape and mislocalization of the integrin-binding protein rhea/Talin (PubMed:23862019). Defects in motor axon guidance with failure of motor axons to defasciculate from one another and innervate their proper muscle targets (PubMed:15282266). Wings display disrupted posterior crossveins (PubMed:26440503). RNAi-mediated knockdown in malpighian tubule principal cells inhibits NPLP1-4-mediated increases in fluid transport rates and cGMP levels, inhibits NPLP1-4-mediated nuclear translocation of NF-kappa-B protein Rel and abolishes expression of the antimicrobial peptide diptericin (PubMed:21893139).</text>
</comment>
<comment type="similarity">
    <text evidence="1 5">Belongs to the adenylyl cyclase class-4/guanylyl cyclase family.</text>
</comment>
<reference evidence="18" key="1">
    <citation type="journal article" date="1995" name="J. Biol. Chem.">
        <title>Identification, characterization, and developmental regulation of a receptor guanylyl cyclase expressed during early stages of Drosophila development.</title>
        <authorList>
            <person name="McNeil L."/>
            <person name="Chinkers M."/>
            <person name="Forte M."/>
        </authorList>
    </citation>
    <scope>NUCLEOTIDE SEQUENCE [MRNA]</scope>
    <scope>DEVELOPMENTAL STAGE</scope>
</reference>
<reference evidence="19" key="2">
    <citation type="journal article" date="1995" name="J. Biol. Chem.">
        <title>Molecular characterization of two Drosophila guanylate cyclases expressed in the nervous system.</title>
        <authorList>
            <person name="Liu W."/>
            <person name="Yoon J."/>
            <person name="Burg M."/>
            <person name="Chen L."/>
            <person name="Pak W.L."/>
        </authorList>
    </citation>
    <scope>NUCLEOTIDE SEQUENCE [MRNA]</scope>
    <scope>TISSUE SPECIFICITY</scope>
    <scope>DEVELOPMENTAL STAGE</scope>
</reference>
<reference evidence="22" key="3">
    <citation type="journal article" date="2000" name="Science">
        <title>The genome sequence of Drosophila melanogaster.</title>
        <authorList>
            <person name="Adams M.D."/>
            <person name="Celniker S.E."/>
            <person name="Holt R.A."/>
            <person name="Evans C.A."/>
            <person name="Gocayne J.D."/>
            <person name="Amanatides P.G."/>
            <person name="Scherer S.E."/>
            <person name="Li P.W."/>
            <person name="Hoskins R.A."/>
            <person name="Galle R.F."/>
            <person name="George R.A."/>
            <person name="Lewis S.E."/>
            <person name="Richards S."/>
            <person name="Ashburner M."/>
            <person name="Henderson S.N."/>
            <person name="Sutton G.G."/>
            <person name="Wortman J.R."/>
            <person name="Yandell M.D."/>
            <person name="Zhang Q."/>
            <person name="Chen L.X."/>
            <person name="Brandon R.C."/>
            <person name="Rogers Y.-H.C."/>
            <person name="Blazej R.G."/>
            <person name="Champe M."/>
            <person name="Pfeiffer B.D."/>
            <person name="Wan K.H."/>
            <person name="Doyle C."/>
            <person name="Baxter E.G."/>
            <person name="Helt G."/>
            <person name="Nelson C.R."/>
            <person name="Miklos G.L.G."/>
            <person name="Abril J.F."/>
            <person name="Agbayani A."/>
            <person name="An H.-J."/>
            <person name="Andrews-Pfannkoch C."/>
            <person name="Baldwin D."/>
            <person name="Ballew R.M."/>
            <person name="Basu A."/>
            <person name="Baxendale J."/>
            <person name="Bayraktaroglu L."/>
            <person name="Beasley E.M."/>
            <person name="Beeson K.Y."/>
            <person name="Benos P.V."/>
            <person name="Berman B.P."/>
            <person name="Bhandari D."/>
            <person name="Bolshakov S."/>
            <person name="Borkova D."/>
            <person name="Botchan M.R."/>
            <person name="Bouck J."/>
            <person name="Brokstein P."/>
            <person name="Brottier P."/>
            <person name="Burtis K.C."/>
            <person name="Busam D.A."/>
            <person name="Butler H."/>
            <person name="Cadieu E."/>
            <person name="Center A."/>
            <person name="Chandra I."/>
            <person name="Cherry J.M."/>
            <person name="Cawley S."/>
            <person name="Dahlke C."/>
            <person name="Davenport L.B."/>
            <person name="Davies P."/>
            <person name="de Pablos B."/>
            <person name="Delcher A."/>
            <person name="Deng Z."/>
            <person name="Mays A.D."/>
            <person name="Dew I."/>
            <person name="Dietz S.M."/>
            <person name="Dodson K."/>
            <person name="Doup L.E."/>
            <person name="Downes M."/>
            <person name="Dugan-Rocha S."/>
            <person name="Dunkov B.C."/>
            <person name="Dunn P."/>
            <person name="Durbin K.J."/>
            <person name="Evangelista C.C."/>
            <person name="Ferraz C."/>
            <person name="Ferriera S."/>
            <person name="Fleischmann W."/>
            <person name="Fosler C."/>
            <person name="Gabrielian A.E."/>
            <person name="Garg N.S."/>
            <person name="Gelbart W.M."/>
            <person name="Glasser K."/>
            <person name="Glodek A."/>
            <person name="Gong F."/>
            <person name="Gorrell J.H."/>
            <person name="Gu Z."/>
            <person name="Guan P."/>
            <person name="Harris M."/>
            <person name="Harris N.L."/>
            <person name="Harvey D.A."/>
            <person name="Heiman T.J."/>
            <person name="Hernandez J.R."/>
            <person name="Houck J."/>
            <person name="Hostin D."/>
            <person name="Houston K.A."/>
            <person name="Howland T.J."/>
            <person name="Wei M.-H."/>
            <person name="Ibegwam C."/>
            <person name="Jalali M."/>
            <person name="Kalush F."/>
            <person name="Karpen G.H."/>
            <person name="Ke Z."/>
            <person name="Kennison J.A."/>
            <person name="Ketchum K.A."/>
            <person name="Kimmel B.E."/>
            <person name="Kodira C.D."/>
            <person name="Kraft C.L."/>
            <person name="Kravitz S."/>
            <person name="Kulp D."/>
            <person name="Lai Z."/>
            <person name="Lasko P."/>
            <person name="Lei Y."/>
            <person name="Levitsky A.A."/>
            <person name="Li J.H."/>
            <person name="Li Z."/>
            <person name="Liang Y."/>
            <person name="Lin X."/>
            <person name="Liu X."/>
            <person name="Mattei B."/>
            <person name="McIntosh T.C."/>
            <person name="McLeod M.P."/>
            <person name="McPherson D."/>
            <person name="Merkulov G."/>
            <person name="Milshina N.V."/>
            <person name="Mobarry C."/>
            <person name="Morris J."/>
            <person name="Moshrefi A."/>
            <person name="Mount S.M."/>
            <person name="Moy M."/>
            <person name="Murphy B."/>
            <person name="Murphy L."/>
            <person name="Muzny D.M."/>
            <person name="Nelson D.L."/>
            <person name="Nelson D.R."/>
            <person name="Nelson K.A."/>
            <person name="Nixon K."/>
            <person name="Nusskern D.R."/>
            <person name="Pacleb J.M."/>
            <person name="Palazzolo M."/>
            <person name="Pittman G.S."/>
            <person name="Pan S."/>
            <person name="Pollard J."/>
            <person name="Puri V."/>
            <person name="Reese M.G."/>
            <person name="Reinert K."/>
            <person name="Remington K."/>
            <person name="Saunders R.D.C."/>
            <person name="Scheeler F."/>
            <person name="Shen H."/>
            <person name="Shue B.C."/>
            <person name="Siden-Kiamos I."/>
            <person name="Simpson M."/>
            <person name="Skupski M.P."/>
            <person name="Smith T.J."/>
            <person name="Spier E."/>
            <person name="Spradling A.C."/>
            <person name="Stapleton M."/>
            <person name="Strong R."/>
            <person name="Sun E."/>
            <person name="Svirskas R."/>
            <person name="Tector C."/>
            <person name="Turner R."/>
            <person name="Venter E."/>
            <person name="Wang A.H."/>
            <person name="Wang X."/>
            <person name="Wang Z.-Y."/>
            <person name="Wassarman D.A."/>
            <person name="Weinstock G.M."/>
            <person name="Weissenbach J."/>
            <person name="Williams S.M."/>
            <person name="Woodage T."/>
            <person name="Worley K.C."/>
            <person name="Wu D."/>
            <person name="Yang S."/>
            <person name="Yao Q.A."/>
            <person name="Ye J."/>
            <person name="Yeh R.-F."/>
            <person name="Zaveri J.S."/>
            <person name="Zhan M."/>
            <person name="Zhang G."/>
            <person name="Zhao Q."/>
            <person name="Zheng L."/>
            <person name="Zheng X.H."/>
            <person name="Zhong F.N."/>
            <person name="Zhong W."/>
            <person name="Zhou X."/>
            <person name="Zhu S.C."/>
            <person name="Zhu X."/>
            <person name="Smith H.O."/>
            <person name="Gibbs R.A."/>
            <person name="Myers E.W."/>
            <person name="Rubin G.M."/>
            <person name="Venter J.C."/>
        </authorList>
    </citation>
    <scope>NUCLEOTIDE SEQUENCE [LARGE SCALE GENOMIC DNA]</scope>
    <source>
        <strain evidence="22">Berkeley</strain>
    </source>
</reference>
<reference evidence="22" key="4">
    <citation type="journal article" date="2002" name="Genome Biol.">
        <title>Annotation of the Drosophila melanogaster euchromatic genome: a systematic review.</title>
        <authorList>
            <person name="Misra S."/>
            <person name="Crosby M.A."/>
            <person name="Mungall C.J."/>
            <person name="Matthews B.B."/>
            <person name="Campbell K.S."/>
            <person name="Hradecky P."/>
            <person name="Huang Y."/>
            <person name="Kaminker J.S."/>
            <person name="Millburn G.H."/>
            <person name="Prochnik S.E."/>
            <person name="Smith C.D."/>
            <person name="Tupy J.L."/>
            <person name="Whitfield E.J."/>
            <person name="Bayraktaroglu L."/>
            <person name="Berman B.P."/>
            <person name="Bettencourt B.R."/>
            <person name="Celniker S.E."/>
            <person name="de Grey A.D.N.J."/>
            <person name="Drysdale R.A."/>
            <person name="Harris N.L."/>
            <person name="Richter J."/>
            <person name="Russo S."/>
            <person name="Schroeder A.J."/>
            <person name="Shu S.Q."/>
            <person name="Stapleton M."/>
            <person name="Yamada C."/>
            <person name="Ashburner M."/>
            <person name="Gelbart W.M."/>
            <person name="Rubin G.M."/>
            <person name="Lewis S.E."/>
        </authorList>
    </citation>
    <scope>GENOME REANNOTATION</scope>
    <source>
        <strain evidence="22">Berkeley</strain>
    </source>
</reference>
<reference evidence="20" key="5">
    <citation type="submission" date="2003-12" db="EMBL/GenBank/DDBJ databases">
        <authorList>
            <person name="Stapleton M."/>
            <person name="Brokstein P."/>
            <person name="Hong L."/>
            <person name="Agbayani A."/>
            <person name="Carlson J."/>
            <person name="Champe M."/>
            <person name="Chavez C."/>
            <person name="Dorsett V."/>
            <person name="Dresnek D."/>
            <person name="Farfan D."/>
            <person name="Frise E."/>
            <person name="George R."/>
            <person name="Gonzalez M."/>
            <person name="Guarin H."/>
            <person name="Kronmiller B."/>
            <person name="Li P."/>
            <person name="Liao G."/>
            <person name="Miranda A."/>
            <person name="Mungall C.J."/>
            <person name="Nunoo J."/>
            <person name="Pacleb J."/>
            <person name="Paragas V."/>
            <person name="Park S."/>
            <person name="Patel S."/>
            <person name="Phouanenavong S."/>
            <person name="Wan K."/>
            <person name="Yu C."/>
            <person name="Lewis S.E."/>
            <person name="Rubin G.M."/>
            <person name="Celniker S."/>
        </authorList>
    </citation>
    <scope>NUCLEOTIDE SEQUENCE [LARGE SCALE MRNA]</scope>
    <source>
        <strain evidence="20">Berkeley</strain>
        <tissue evidence="20">Embryo</tissue>
    </source>
</reference>
<reference evidence="17" key="6">
    <citation type="journal article" date="2004" name="J. Neurosci.">
        <title>The Drosophila receptor guanylyl cyclase Gyc76C is required for semaphorin-1a-plexin A-mediated axonal repulsion.</title>
        <authorList>
            <person name="Ayoob J.C."/>
            <person name="Yu H.H."/>
            <person name="Terman J.R."/>
            <person name="Kolodkin A.L."/>
        </authorList>
    </citation>
    <scope>FUNCTION</scope>
    <scope>DOMAIN</scope>
    <scope>DISRUPTION PHENOTYPE</scope>
</reference>
<reference evidence="17" key="7">
    <citation type="journal article" date="2012" name="Biol. Open">
        <title>Receptor-type guanylyl cyclase Gyc76C is required for development of the Drosophila embryonic somatic muscle.</title>
        <authorList>
            <person name="Patel U."/>
            <person name="Davies S.A."/>
            <person name="Myat M.M."/>
        </authorList>
    </citation>
    <scope>FUNCTION</scope>
    <scope>TISSUE SPECIFICITY</scope>
    <scope>DISRUPTION PHENOTYPE</scope>
</reference>
<reference evidence="17" key="8">
    <citation type="journal article" date="2012" name="Peptides">
        <title>The receptor guanylate cyclase Gyc76C and a peptide ligand, NPLP1-VQQ, modulate the innate immune IMD pathway in response to salt stress.</title>
        <authorList>
            <person name="Overend G."/>
            <person name="Cabrero P."/>
            <person name="Guo A.X."/>
            <person name="Sebastian S."/>
            <person name="Cundall M."/>
            <person name="Armstrong H."/>
            <person name="Mertens I."/>
            <person name="Schoofs L."/>
            <person name="Dow J.A."/>
            <person name="Davies S.A."/>
        </authorList>
    </citation>
    <scope>FUNCTION</scope>
    <scope>DISRUPTION PHENOTYPE</scope>
</reference>
<reference evidence="17" key="9">
    <citation type="journal article" date="2013" name="Biol. Open">
        <title>Receptor guanylyl cyclase Gyc76C is required for invagination, collective migration and lumen shape in the Drosophila embryonic salivary gland.</title>
        <authorList>
            <person name="Patel U."/>
            <person name="Myat M.M."/>
        </authorList>
    </citation>
    <scope>FUNCTION</scope>
    <scope>DISRUPTION PHENOTYPE</scope>
</reference>
<reference evidence="17" key="10">
    <citation type="journal article" date="2014" name="Development">
        <title>Function of the Drosophila receptor guanylyl cyclase Gyc76C in PlexA-mediated motor axon guidance.</title>
        <authorList>
            <person name="Chak K."/>
            <person name="Kolodkin A.L."/>
        </authorList>
    </citation>
    <scope>FUNCTION</scope>
    <scope>CATALYTIC ACTIVITY</scope>
    <scope>SUBCELLULAR LOCATION</scope>
    <scope>INTERACTION WITH KERMIT AND PLEXA</scope>
    <scope>MUTAGENESIS OF ASP-945</scope>
</reference>
<reference evidence="17" key="11">
    <citation type="journal article" date="2015" name="PLoS Genet.">
        <title>The Gyc76C receptor guanylyl cyclase and the foraging cGMP-dependent kinase regulate extracellular matrix organization and BMP signaling in the developing wing of Drosophila melanogaster.</title>
        <authorList>
            <person name="Schleede J."/>
            <person name="Blair S.S."/>
        </authorList>
    </citation>
    <scope>FUNCTION</scope>
    <scope>DISRUPTION PHENOTYPE</scope>
    <scope>MUTAGENESIS OF LEU-635</scope>
</reference>
<gene>
    <name evidence="21" type="primary">Gyc76C</name>
    <name evidence="21" type="ORF">CG42636</name>
</gene>
<feature type="signal peptide" evidence="1">
    <location>
        <begin position="1"/>
        <end position="19"/>
    </location>
</feature>
<feature type="chain" id="PRO_5007213161" description="Receptor-type guanylate cyclase Gyc76C">
    <location>
        <begin position="20"/>
        <end position="1525"/>
    </location>
</feature>
<feature type="topological domain" description="Extracellular" evidence="17">
    <location>
        <begin position="20"/>
        <end position="493"/>
    </location>
</feature>
<feature type="transmembrane region" description="Helical" evidence="1">
    <location>
        <begin position="494"/>
        <end position="514"/>
    </location>
</feature>
<feature type="topological domain" description="Cytoplasmic" evidence="17">
    <location>
        <begin position="515"/>
        <end position="1525"/>
    </location>
</feature>
<feature type="domain" description="Protein kinase" evidence="3">
    <location>
        <begin position="547"/>
        <end position="824"/>
    </location>
</feature>
<feature type="domain" description="Guanylate cyclase" evidence="2">
    <location>
        <begin position="896"/>
        <end position="1026"/>
    </location>
</feature>
<feature type="region of interest" description="Disordered" evidence="7">
    <location>
        <begin position="1122"/>
        <end position="1168"/>
    </location>
</feature>
<feature type="region of interest" description="Disordered" evidence="7">
    <location>
        <begin position="1192"/>
        <end position="1217"/>
    </location>
</feature>
<feature type="region of interest" description="Disordered" evidence="7">
    <location>
        <begin position="1256"/>
        <end position="1308"/>
    </location>
</feature>
<feature type="compositionally biased region" description="Basic and acidic residues" evidence="7">
    <location>
        <begin position="1147"/>
        <end position="1162"/>
    </location>
</feature>
<feature type="compositionally biased region" description="Gly residues" evidence="7">
    <location>
        <begin position="1202"/>
        <end position="1212"/>
    </location>
</feature>
<feature type="compositionally biased region" description="Polar residues" evidence="7">
    <location>
        <begin position="1282"/>
        <end position="1308"/>
    </location>
</feature>
<feature type="binding site" evidence="3">
    <location>
        <begin position="553"/>
        <end position="561"/>
    </location>
    <ligand>
        <name>ATP</name>
        <dbReference type="ChEBI" id="CHEBI:30616"/>
    </ligand>
</feature>
<feature type="binding site" evidence="3">
    <location>
        <position position="581"/>
    </location>
    <ligand>
        <name>ATP</name>
        <dbReference type="ChEBI" id="CHEBI:30616"/>
    </ligand>
</feature>
<feature type="binding site" evidence="2">
    <location>
        <position position="901"/>
    </location>
    <ligand>
        <name>Mg(2+)</name>
        <dbReference type="ChEBI" id="CHEBI:18420"/>
        <label>1</label>
    </ligand>
</feature>
<feature type="binding site" evidence="2">
    <location>
        <position position="901"/>
    </location>
    <ligand>
        <name>Mg(2+)</name>
        <dbReference type="ChEBI" id="CHEBI:18420"/>
        <label>2</label>
    </ligand>
</feature>
<feature type="binding site" evidence="2">
    <location>
        <position position="902"/>
    </location>
    <ligand>
        <name>Mg(2+)</name>
        <dbReference type="ChEBI" id="CHEBI:18420"/>
        <label>2</label>
    </ligand>
</feature>
<feature type="binding site" evidence="2">
    <location>
        <position position="945"/>
    </location>
    <ligand>
        <name>Mg(2+)</name>
        <dbReference type="ChEBI" id="CHEBI:18420"/>
        <label>1</label>
    </ligand>
</feature>
<feature type="binding site" evidence="2">
    <location>
        <position position="945"/>
    </location>
    <ligand>
        <name>Mg(2+)</name>
        <dbReference type="ChEBI" id="CHEBI:18420"/>
        <label>2</label>
    </ligand>
</feature>
<feature type="glycosylation site" description="N-linked (GlcNAc...) asparagine" evidence="4">
    <location>
        <position position="74"/>
    </location>
</feature>
<feature type="glycosylation site" description="N-linked (GlcNAc...) asparagine" evidence="4">
    <location>
        <position position="184"/>
    </location>
</feature>
<feature type="glycosylation site" description="N-linked (GlcNAc...) asparagine" evidence="4">
    <location>
        <position position="222"/>
    </location>
</feature>
<feature type="glycosylation site" description="N-linked (GlcNAc...) asparagine" evidence="4">
    <location>
        <position position="338"/>
    </location>
</feature>
<feature type="glycosylation site" description="N-linked (GlcNAc...) asparagine" evidence="4">
    <location>
        <position position="383"/>
    </location>
</feature>
<feature type="glycosylation site" description="N-linked (GlcNAc...) asparagine" evidence="4">
    <location>
        <position position="394"/>
    </location>
</feature>
<feature type="glycosylation site" description="N-linked (GlcNAc...) asparagine" evidence="4">
    <location>
        <position position="416"/>
    </location>
</feature>
<feature type="glycosylation site" description="N-linked (GlcNAc...) asparagine" evidence="4">
    <location>
        <position position="428"/>
    </location>
</feature>
<feature type="glycosylation site" description="N-linked (GlcNAc...) asparagine" evidence="4">
    <location>
        <position position="458"/>
    </location>
</feature>
<feature type="mutagenesis site" description="In 3L043; complete loss of the posterior crossvein in adult wings." evidence="13">
    <original>L</original>
    <variation>H</variation>
    <location>
        <position position="635"/>
    </location>
</feature>
<feature type="mutagenesis site" description="Abolishes guanylate cyclase activity but does not affect cell surface location." evidence="12">
    <original>D</original>
    <variation>A</variation>
    <location>
        <position position="945"/>
    </location>
</feature>
<feature type="sequence conflict" description="In Ref. 2; AAA85858." evidence="17" ref="2">
    <original>A</original>
    <variation>S</variation>
    <location>
        <position position="381"/>
    </location>
</feature>
<proteinExistence type="evidence at protein level"/>
<accession>Q7JQ32</accession>
<accession>Q24051</accession>
<name>GC76C_DROME</name>
<protein>
    <recommendedName>
        <fullName evidence="17">Receptor-type guanylate cyclase Gyc76C</fullName>
        <ecNumber evidence="1 6 12">4.6.1.2</ecNumber>
    </recommendedName>
    <alternativeName>
        <fullName evidence="16">DrGC-1</fullName>
    </alternativeName>
</protein>
<organism evidence="18">
    <name type="scientific">Drosophila melanogaster</name>
    <name type="common">Fruit fly</name>
    <dbReference type="NCBI Taxonomy" id="7227"/>
    <lineage>
        <taxon>Eukaryota</taxon>
        <taxon>Metazoa</taxon>
        <taxon>Ecdysozoa</taxon>
        <taxon>Arthropoda</taxon>
        <taxon>Hexapoda</taxon>
        <taxon>Insecta</taxon>
        <taxon>Pterygota</taxon>
        <taxon>Neoptera</taxon>
        <taxon>Endopterygota</taxon>
        <taxon>Diptera</taxon>
        <taxon>Brachycera</taxon>
        <taxon>Muscomorpha</taxon>
        <taxon>Ephydroidea</taxon>
        <taxon>Drosophilidae</taxon>
        <taxon>Drosophila</taxon>
        <taxon>Sophophora</taxon>
    </lineage>
</organism>
<keyword id="KW-0067">ATP-binding</keyword>
<keyword id="KW-1003">Cell membrane</keyword>
<keyword id="KW-0141">cGMP biosynthesis</keyword>
<keyword id="KW-0325">Glycoprotein</keyword>
<keyword id="KW-0342">GTP-binding</keyword>
<keyword id="KW-0456">Lyase</keyword>
<keyword id="KW-0460">Magnesium</keyword>
<keyword id="KW-0472">Membrane</keyword>
<keyword id="KW-0479">Metal-binding</keyword>
<keyword id="KW-0547">Nucleotide-binding</keyword>
<keyword id="KW-0675">Receptor</keyword>
<keyword id="KW-1185">Reference proteome</keyword>
<keyword id="KW-0732">Signal</keyword>
<keyword id="KW-0812">Transmembrane</keyword>
<keyword id="KW-1133">Transmembrane helix</keyword>
<sequence>MTRWPFNLLLLLSVAVRDCSNHRTVLTVGYLTALTGDLKTRQGLAISGALTMALDEVNKDPNLLPNVYLDLRWNDTKGDTVLATKAITEMICDGIATIFGPEGPCYVEAIVSQSRNIPMISYKCAEYRASAIPTFARTEPPDTQVVKSLLALLRYYAWNKFSILYEDVWSPVADLLKDQATKRNMTINHKQSFIDNRVKCCEQMLDCCRSGYWYQLVQNTMNRTRIYVFLGAANSLVDFMSSMETAGLFARGEYMVIFVDMMVYSEREAEKYLRRVDQITFMSNCHSTENFNQMARSLLVVASTPPTKDYIQFTKQVQKYSSKPPFNLEIPRLFVESNFSKFISIYAAYLYDSVKLYAWAVDKMLREETRVLTDDVIFEVASNGTRVIDTIIKNRTYMSITGSKIKIDQYGDSEGNFSVLAYKPHKWNNSNNMPCNYHMVPVAYFHQGEEHPEYKLINGSIDWPSGGEKPADEPMCGFANELCKKDDTHYTSTVAAVVLGVLLFCSGVITMSIYRKWKIELEIEGLLWKIDPNEIKGYSGNEIVSSPSKVSLMSAQSYGSRWTNQFVTSTGRLRGAVVRIKELKFPRKRDISREIMKEMRLLRELRHDNINSFIGASVEPTRILLVTDYCAKGSLYDIIENEDIKLDDLFIASLIHDLIKGMIYIHNSQLVYHGNLKSSNCVVTSRWMLQVTDFGLHELRQCAENESIGEHQHYRNQLWRAPELLRNHIHGSQKGDVYAFAIIMYEIFSRKGPFGQINFEPKEIVDYVKKLPLKGEDPFRPEVESIIEAESCPDYVLACIRDCWAEDPEERPEFSVIRNRLKKMRGGKTKNIMDQMMEMMEKYANNLEDIVTERTRLLCEEKMKTEDLLHRMLPQSVAEKLTMGQGVEPVSYDLVTIYFSDIVGFTAMSAESTPLQVVNFLNDLYTVFDRIIRGYDVYKVETIGDAYMVVSGLPIKNGDRHAGEIASMALELLHAVKQHRIAHRPNETLKLRIGMHTGPVVAGVVGLTMPRYCLFGDTVNTASRMESNGEALKIHISNKCKLALDKLGGGYITEKRGLVNMKGKGDVVTWWLTGANENAIQKKLVDMMDMPPPLFSRPRKSPKLNPDSRQPSIQAMHFCGTGSRRQSTVPRAMDGESTYSLQGSVRESPRMVSKRDRDRERPPINGLGAGHFVGGALLESAQASLSTLNHSETNETNCDMDGGSGGVSGSGSGLVRQPNALHKPLAMVRPHRIISAAQLPQLGDNDDDSADTLLRESRSLDPMPMQQLRKRHDRVKLPPSKLSKNNSRSLDTGVSLISGNPNGEVHSSQLDLDNEMTANPVDATDGYDDELGLLMRHDNGQLPALRYSGSFPNAQISIVPTGRSAGGGGGGREGGGSNCAKHLNNNCNGGVNVEDDLESPLLQRQASLSVPPEEMLAHNKRWHSLEHMDGPGGHGGNSVSYAADIDNRHPGDLDFFSGSSNQHHRSKAAGGSKLTNWMTNIFKGNGVRSGEARRVGILPSGVHGARTGFTDMAASAAARDRESIV</sequence>
<dbReference type="EC" id="4.6.1.2" evidence="1 6 12"/>
<dbReference type="EMBL" id="L35598">
    <property type="protein sequence ID" value="AAA74408.1"/>
    <property type="molecule type" value="mRNA"/>
</dbReference>
<dbReference type="EMBL" id="U23485">
    <property type="protein sequence ID" value="AAA85858.1"/>
    <property type="molecule type" value="mRNA"/>
</dbReference>
<dbReference type="EMBL" id="AE014296">
    <property type="protein sequence ID" value="ACZ94744.1"/>
    <property type="molecule type" value="Genomic_DNA"/>
</dbReference>
<dbReference type="EMBL" id="AE014296">
    <property type="protein sequence ID" value="ACZ94745.1"/>
    <property type="molecule type" value="Genomic_DNA"/>
</dbReference>
<dbReference type="EMBL" id="AE014296">
    <property type="protein sequence ID" value="ACZ94746.1"/>
    <property type="molecule type" value="Genomic_DNA"/>
</dbReference>
<dbReference type="EMBL" id="AE014296">
    <property type="protein sequence ID" value="AGB94756.1"/>
    <property type="molecule type" value="Genomic_DNA"/>
</dbReference>
<dbReference type="EMBL" id="BT011062">
    <property type="protein sequence ID" value="AAR31133.1"/>
    <property type="molecule type" value="mRNA"/>
</dbReference>
<dbReference type="PIR" id="A56699">
    <property type="entry name" value="A56699"/>
</dbReference>
<dbReference type="RefSeq" id="NP_001163473.1">
    <property type="nucleotide sequence ID" value="NM_001170002.1"/>
</dbReference>
<dbReference type="RefSeq" id="NP_001163474.1">
    <property type="nucleotide sequence ID" value="NM_001170003.2"/>
</dbReference>
<dbReference type="RefSeq" id="NP_001163475.1">
    <property type="nucleotide sequence ID" value="NM_001170004.2"/>
</dbReference>
<dbReference type="RefSeq" id="NP_001262063.1">
    <property type="nucleotide sequence ID" value="NM_001275134.1"/>
</dbReference>
<dbReference type="SMR" id="Q7JQ32"/>
<dbReference type="FunCoup" id="Q7JQ32">
    <property type="interactions" value="189"/>
</dbReference>
<dbReference type="IntAct" id="Q7JQ32">
    <property type="interactions" value="8"/>
</dbReference>
<dbReference type="STRING" id="7227.FBpp0291485"/>
<dbReference type="GlyCosmos" id="Q7JQ32">
    <property type="glycosylation" value="9 sites, No reported glycans"/>
</dbReference>
<dbReference type="GlyGen" id="Q7JQ32">
    <property type="glycosylation" value="9 sites"/>
</dbReference>
<dbReference type="PaxDb" id="7227-FBpp0291484"/>
<dbReference type="EnsemblMetazoa" id="FBtr0302277">
    <property type="protein sequence ID" value="FBpp0291483"/>
    <property type="gene ID" value="FBgn0261360"/>
</dbReference>
<dbReference type="EnsemblMetazoa" id="FBtr0302278">
    <property type="protein sequence ID" value="FBpp0291484"/>
    <property type="gene ID" value="FBgn0261360"/>
</dbReference>
<dbReference type="EnsemblMetazoa" id="FBtr0302279">
    <property type="protein sequence ID" value="FBpp0291485"/>
    <property type="gene ID" value="FBgn0261360"/>
</dbReference>
<dbReference type="EnsemblMetazoa" id="FBtr0302280">
    <property type="protein sequence ID" value="FBpp0291486"/>
    <property type="gene ID" value="FBgn0266136"/>
</dbReference>
<dbReference type="EnsemblMetazoa" id="FBtr0302281">
    <property type="protein sequence ID" value="FBpp0291487"/>
    <property type="gene ID" value="FBgn0266136"/>
</dbReference>
<dbReference type="EnsemblMetazoa" id="FBtr0302282">
    <property type="protein sequence ID" value="FBpp0291488"/>
    <property type="gene ID" value="FBgn0266136"/>
</dbReference>
<dbReference type="EnsemblMetazoa" id="FBtr0333879">
    <property type="protein sequence ID" value="FBpp0306011"/>
    <property type="gene ID" value="FBgn0266136"/>
</dbReference>
<dbReference type="GeneID" id="8674026"/>
<dbReference type="KEGG" id="dme:Dmel_CG42636"/>
<dbReference type="KEGG" id="dme:Dmel_CG42637"/>
<dbReference type="AGR" id="FB:FBgn0266136"/>
<dbReference type="CTD" id="8674026"/>
<dbReference type="FlyBase" id="FBgn0266136">
    <property type="gene designation" value="Gyc76C"/>
</dbReference>
<dbReference type="VEuPathDB" id="VectorBase:FBgn0261360"/>
<dbReference type="VEuPathDB" id="VectorBase:FBgn0266136"/>
<dbReference type="eggNOG" id="KOG1023">
    <property type="taxonomic scope" value="Eukaryota"/>
</dbReference>
<dbReference type="GeneTree" id="ENSGT00940000168507"/>
<dbReference type="HOGENOM" id="CLU_001072_1_1_1"/>
<dbReference type="InParanoid" id="Q7JQ32"/>
<dbReference type="OMA" id="PTDEPMC"/>
<dbReference type="OrthoDB" id="5984008at2759"/>
<dbReference type="PhylomeDB" id="Q7JQ32"/>
<dbReference type="Reactome" id="R-DME-2514859">
    <property type="pathway name" value="Inactivation, recovery and regulation of the phototransduction cascade"/>
</dbReference>
<dbReference type="SignaLink" id="Q7JQ32"/>
<dbReference type="ChiTaRS" id="Gyc76C">
    <property type="organism name" value="fly"/>
</dbReference>
<dbReference type="PRO" id="PR:Q7JQ32"/>
<dbReference type="Proteomes" id="UP000000803">
    <property type="component" value="Chromosome 3L"/>
</dbReference>
<dbReference type="Bgee" id="FBgn0261360">
    <property type="expression patterns" value="Expressed in digestive system element and 10 other cell types or tissues"/>
</dbReference>
<dbReference type="ExpressionAtlas" id="Q7JQ32">
    <property type="expression patterns" value="baseline"/>
</dbReference>
<dbReference type="GO" id="GO:0005886">
    <property type="term" value="C:plasma membrane"/>
    <property type="evidence" value="ECO:0000314"/>
    <property type="project" value="FlyBase"/>
</dbReference>
<dbReference type="GO" id="GO:0005524">
    <property type="term" value="F:ATP binding"/>
    <property type="evidence" value="ECO:0007669"/>
    <property type="project" value="UniProtKB-KW"/>
</dbReference>
<dbReference type="GO" id="GO:0005525">
    <property type="term" value="F:GTP binding"/>
    <property type="evidence" value="ECO:0007669"/>
    <property type="project" value="UniProtKB-KW"/>
</dbReference>
<dbReference type="GO" id="GO:0004383">
    <property type="term" value="F:guanylate cyclase activity"/>
    <property type="evidence" value="ECO:0000314"/>
    <property type="project" value="FlyBase"/>
</dbReference>
<dbReference type="GO" id="GO:0046872">
    <property type="term" value="F:metal ion binding"/>
    <property type="evidence" value="ECO:0007669"/>
    <property type="project" value="UniProtKB-KW"/>
</dbReference>
<dbReference type="GO" id="GO:0001653">
    <property type="term" value="F:peptide receptor activity"/>
    <property type="evidence" value="ECO:0000353"/>
    <property type="project" value="FlyBase"/>
</dbReference>
<dbReference type="GO" id="GO:0030215">
    <property type="term" value="F:semaphorin receptor binding"/>
    <property type="evidence" value="ECO:0000353"/>
    <property type="project" value="FlyBase"/>
</dbReference>
<dbReference type="GO" id="GO:0038023">
    <property type="term" value="F:signaling receptor activity"/>
    <property type="evidence" value="ECO:0000314"/>
    <property type="project" value="FlyBase"/>
</dbReference>
<dbReference type="GO" id="GO:0007411">
    <property type="term" value="P:axon guidance"/>
    <property type="evidence" value="ECO:0000316"/>
    <property type="project" value="FlyBase"/>
</dbReference>
<dbReference type="GO" id="GO:0016199">
    <property type="term" value="P:axon midline choice point recognition"/>
    <property type="evidence" value="ECO:0000316"/>
    <property type="project" value="FlyBase"/>
</dbReference>
<dbReference type="GO" id="GO:0006182">
    <property type="term" value="P:cGMP biosynthetic process"/>
    <property type="evidence" value="ECO:0000318"/>
    <property type="project" value="GO_Central"/>
</dbReference>
<dbReference type="GO" id="GO:0050830">
    <property type="term" value="P:defense response to Gram-positive bacterium"/>
    <property type="evidence" value="ECO:0000315"/>
    <property type="project" value="FlyBase"/>
</dbReference>
<dbReference type="GO" id="GO:0030198">
    <property type="term" value="P:extracellular matrix organization"/>
    <property type="evidence" value="ECO:0000315"/>
    <property type="project" value="UniProtKB"/>
</dbReference>
<dbReference type="GO" id="GO:0035556">
    <property type="term" value="P:intracellular signal transduction"/>
    <property type="evidence" value="ECO:0007669"/>
    <property type="project" value="InterPro"/>
</dbReference>
<dbReference type="GO" id="GO:0007526">
    <property type="term" value="P:larval somatic muscle development"/>
    <property type="evidence" value="ECO:0000315"/>
    <property type="project" value="FlyBase"/>
</dbReference>
<dbReference type="GO" id="GO:0008045">
    <property type="term" value="P:motor neuron axon guidance"/>
    <property type="evidence" value="ECO:0000315"/>
    <property type="project" value="FlyBase"/>
</dbReference>
<dbReference type="GO" id="GO:0007428">
    <property type="term" value="P:primary branching, open tracheal system"/>
    <property type="evidence" value="ECO:0000315"/>
    <property type="project" value="FlyBase"/>
</dbReference>
<dbReference type="GO" id="GO:0007168">
    <property type="term" value="P:receptor guanylyl cyclase signaling pathway"/>
    <property type="evidence" value="ECO:0000314"/>
    <property type="project" value="FlyBase"/>
</dbReference>
<dbReference type="GO" id="GO:0030510">
    <property type="term" value="P:regulation of BMP signaling pathway"/>
    <property type="evidence" value="ECO:0000315"/>
    <property type="project" value="UniProtKB"/>
</dbReference>
<dbReference type="GO" id="GO:0009651">
    <property type="term" value="P:response to salt stress"/>
    <property type="evidence" value="ECO:0000315"/>
    <property type="project" value="FlyBase"/>
</dbReference>
<dbReference type="GO" id="GO:0007435">
    <property type="term" value="P:salivary gland morphogenesis"/>
    <property type="evidence" value="ECO:0000315"/>
    <property type="project" value="FlyBase"/>
</dbReference>
<dbReference type="CDD" id="cd07302">
    <property type="entry name" value="CHD"/>
    <property type="match status" value="1"/>
</dbReference>
<dbReference type="CDD" id="cd06370">
    <property type="entry name" value="PBP1_SAP_GC-like"/>
    <property type="match status" value="1"/>
</dbReference>
<dbReference type="CDD" id="cd14042">
    <property type="entry name" value="PK_GC-A_B"/>
    <property type="match status" value="1"/>
</dbReference>
<dbReference type="FunFam" id="1.10.510.10:FF:000545">
    <property type="entry name" value="Guanylate cyclase"/>
    <property type="match status" value="1"/>
</dbReference>
<dbReference type="FunFam" id="3.30.70.1230:FF:000019">
    <property type="entry name" value="Guanylate cyclase"/>
    <property type="match status" value="1"/>
</dbReference>
<dbReference type="FunFam" id="3.40.50.2300:FF:000403">
    <property type="entry name" value="Guanylate cyclase"/>
    <property type="match status" value="1"/>
</dbReference>
<dbReference type="FunFam" id="3.40.50.2300:FF:000568">
    <property type="entry name" value="Guanylate cyclase"/>
    <property type="match status" value="1"/>
</dbReference>
<dbReference type="Gene3D" id="3.40.50.2300">
    <property type="match status" value="2"/>
</dbReference>
<dbReference type="Gene3D" id="6.10.250.780">
    <property type="match status" value="1"/>
</dbReference>
<dbReference type="Gene3D" id="3.30.70.1230">
    <property type="entry name" value="Nucleotide cyclase"/>
    <property type="match status" value="1"/>
</dbReference>
<dbReference type="Gene3D" id="1.10.510.10">
    <property type="entry name" value="Transferase(Phosphotransferase) domain 1"/>
    <property type="match status" value="1"/>
</dbReference>
<dbReference type="InterPro" id="IPR001054">
    <property type="entry name" value="A/G_cyclase"/>
</dbReference>
<dbReference type="InterPro" id="IPR018297">
    <property type="entry name" value="A/G_cyclase_CS"/>
</dbReference>
<dbReference type="InterPro" id="IPR001828">
    <property type="entry name" value="ANF_lig-bd_rcpt"/>
</dbReference>
<dbReference type="InterPro" id="IPR050401">
    <property type="entry name" value="Cyclic_nucleotide_synthase"/>
</dbReference>
<dbReference type="InterPro" id="IPR011009">
    <property type="entry name" value="Kinase-like_dom_sf"/>
</dbReference>
<dbReference type="InterPro" id="IPR029787">
    <property type="entry name" value="Nucleotide_cyclase"/>
</dbReference>
<dbReference type="InterPro" id="IPR028082">
    <property type="entry name" value="Peripla_BP_I"/>
</dbReference>
<dbReference type="InterPro" id="IPR000719">
    <property type="entry name" value="Prot_kinase_dom"/>
</dbReference>
<dbReference type="InterPro" id="IPR001245">
    <property type="entry name" value="Ser-Thr/Tyr_kinase_cat_dom"/>
</dbReference>
<dbReference type="PANTHER" id="PTHR11920">
    <property type="entry name" value="GUANYLYL CYCLASE"/>
    <property type="match status" value="1"/>
</dbReference>
<dbReference type="PANTHER" id="PTHR11920:SF474">
    <property type="entry name" value="RECEPTOR-TYPE GUANYLATE CYCLASE GYC76C"/>
    <property type="match status" value="1"/>
</dbReference>
<dbReference type="Pfam" id="PF01094">
    <property type="entry name" value="ANF_receptor"/>
    <property type="match status" value="1"/>
</dbReference>
<dbReference type="Pfam" id="PF00211">
    <property type="entry name" value="Guanylate_cyc"/>
    <property type="match status" value="1"/>
</dbReference>
<dbReference type="Pfam" id="PF07714">
    <property type="entry name" value="PK_Tyr_Ser-Thr"/>
    <property type="match status" value="1"/>
</dbReference>
<dbReference type="SMART" id="SM00044">
    <property type="entry name" value="CYCc"/>
    <property type="match status" value="1"/>
</dbReference>
<dbReference type="SUPFAM" id="SSF55073">
    <property type="entry name" value="Nucleotide cyclase"/>
    <property type="match status" value="1"/>
</dbReference>
<dbReference type="SUPFAM" id="SSF53822">
    <property type="entry name" value="Periplasmic binding protein-like I"/>
    <property type="match status" value="1"/>
</dbReference>
<dbReference type="SUPFAM" id="SSF56112">
    <property type="entry name" value="Protein kinase-like (PK-like)"/>
    <property type="match status" value="1"/>
</dbReference>
<dbReference type="PROSITE" id="PS00452">
    <property type="entry name" value="GUANYLATE_CYCLASE_1"/>
    <property type="match status" value="1"/>
</dbReference>
<dbReference type="PROSITE" id="PS50125">
    <property type="entry name" value="GUANYLATE_CYCLASE_2"/>
    <property type="match status" value="1"/>
</dbReference>
<dbReference type="PROSITE" id="PS50011">
    <property type="entry name" value="PROTEIN_KINASE_DOM"/>
    <property type="match status" value="1"/>
</dbReference>
<evidence type="ECO:0000255" key="1"/>
<evidence type="ECO:0000255" key="2">
    <source>
        <dbReference type="PROSITE-ProRule" id="PRU00099"/>
    </source>
</evidence>
<evidence type="ECO:0000255" key="3">
    <source>
        <dbReference type="PROSITE-ProRule" id="PRU00159"/>
    </source>
</evidence>
<evidence type="ECO:0000255" key="4">
    <source>
        <dbReference type="PROSITE-ProRule" id="PRU00498"/>
    </source>
</evidence>
<evidence type="ECO:0000255" key="5">
    <source>
        <dbReference type="RuleBase" id="RU000405"/>
    </source>
</evidence>
<evidence type="ECO:0000255" key="6">
    <source>
        <dbReference type="RuleBase" id="RU003431"/>
    </source>
</evidence>
<evidence type="ECO:0000256" key="7">
    <source>
        <dbReference type="SAM" id="MobiDB-lite"/>
    </source>
</evidence>
<evidence type="ECO:0000269" key="8">
    <source>
    </source>
</evidence>
<evidence type="ECO:0000269" key="9">
    <source>
    </source>
</evidence>
<evidence type="ECO:0000269" key="10">
    <source>
    </source>
</evidence>
<evidence type="ECO:0000269" key="11">
    <source>
    </source>
</evidence>
<evidence type="ECO:0000269" key="12">
    <source>
    </source>
</evidence>
<evidence type="ECO:0000269" key="13">
    <source>
    </source>
</evidence>
<evidence type="ECO:0000269" key="14">
    <source>
    </source>
</evidence>
<evidence type="ECO:0000269" key="15">
    <source>
    </source>
</evidence>
<evidence type="ECO:0000303" key="16">
    <source>
    </source>
</evidence>
<evidence type="ECO:0000305" key="17"/>
<evidence type="ECO:0000312" key="18">
    <source>
        <dbReference type="EMBL" id="AAA74408.1"/>
    </source>
</evidence>
<evidence type="ECO:0000312" key="19">
    <source>
        <dbReference type="EMBL" id="AAA85858.1"/>
    </source>
</evidence>
<evidence type="ECO:0000312" key="20">
    <source>
        <dbReference type="EMBL" id="AAR31133.1"/>
    </source>
</evidence>
<evidence type="ECO:0000312" key="21">
    <source>
        <dbReference type="FlyBase" id="FBgn0266136"/>
    </source>
</evidence>
<evidence type="ECO:0000312" key="22">
    <source>
        <dbReference type="Proteomes" id="UP000000803"/>
    </source>
</evidence>